<dbReference type="EC" id="2.7.7.56" evidence="1"/>
<dbReference type="EMBL" id="CP000557">
    <property type="protein sequence ID" value="ABO67939.1"/>
    <property type="molecule type" value="Genomic_DNA"/>
</dbReference>
<dbReference type="RefSeq" id="WP_008881125.1">
    <property type="nucleotide sequence ID" value="NC_009328.1"/>
</dbReference>
<dbReference type="SMR" id="A4IRI5"/>
<dbReference type="KEGG" id="gtn:GTNG_2594"/>
<dbReference type="eggNOG" id="COG0689">
    <property type="taxonomic scope" value="Bacteria"/>
</dbReference>
<dbReference type="HOGENOM" id="CLU_050858_0_0_9"/>
<dbReference type="Proteomes" id="UP000001578">
    <property type="component" value="Chromosome"/>
</dbReference>
<dbReference type="GO" id="GO:0000175">
    <property type="term" value="F:3'-5'-RNA exonuclease activity"/>
    <property type="evidence" value="ECO:0007669"/>
    <property type="project" value="UniProtKB-UniRule"/>
</dbReference>
<dbReference type="GO" id="GO:0000049">
    <property type="term" value="F:tRNA binding"/>
    <property type="evidence" value="ECO:0007669"/>
    <property type="project" value="UniProtKB-UniRule"/>
</dbReference>
<dbReference type="GO" id="GO:0009022">
    <property type="term" value="F:tRNA nucleotidyltransferase activity"/>
    <property type="evidence" value="ECO:0007669"/>
    <property type="project" value="UniProtKB-UniRule"/>
</dbReference>
<dbReference type="GO" id="GO:0016075">
    <property type="term" value="P:rRNA catabolic process"/>
    <property type="evidence" value="ECO:0007669"/>
    <property type="project" value="UniProtKB-UniRule"/>
</dbReference>
<dbReference type="GO" id="GO:0006364">
    <property type="term" value="P:rRNA processing"/>
    <property type="evidence" value="ECO:0007669"/>
    <property type="project" value="UniProtKB-KW"/>
</dbReference>
<dbReference type="GO" id="GO:0008033">
    <property type="term" value="P:tRNA processing"/>
    <property type="evidence" value="ECO:0007669"/>
    <property type="project" value="UniProtKB-UniRule"/>
</dbReference>
<dbReference type="CDD" id="cd11362">
    <property type="entry name" value="RNase_PH_bact"/>
    <property type="match status" value="1"/>
</dbReference>
<dbReference type="FunFam" id="3.30.230.70:FF:000003">
    <property type="entry name" value="Ribonuclease PH"/>
    <property type="match status" value="1"/>
</dbReference>
<dbReference type="Gene3D" id="3.30.230.70">
    <property type="entry name" value="GHMP Kinase, N-terminal domain"/>
    <property type="match status" value="1"/>
</dbReference>
<dbReference type="HAMAP" id="MF_00564">
    <property type="entry name" value="RNase_PH"/>
    <property type="match status" value="1"/>
</dbReference>
<dbReference type="InterPro" id="IPR001247">
    <property type="entry name" value="ExoRNase_PH_dom1"/>
</dbReference>
<dbReference type="InterPro" id="IPR015847">
    <property type="entry name" value="ExoRNase_PH_dom2"/>
</dbReference>
<dbReference type="InterPro" id="IPR036345">
    <property type="entry name" value="ExoRNase_PH_dom2_sf"/>
</dbReference>
<dbReference type="InterPro" id="IPR027408">
    <property type="entry name" value="PNPase/RNase_PH_dom_sf"/>
</dbReference>
<dbReference type="InterPro" id="IPR020568">
    <property type="entry name" value="Ribosomal_Su5_D2-typ_SF"/>
</dbReference>
<dbReference type="InterPro" id="IPR050080">
    <property type="entry name" value="RNase_PH"/>
</dbReference>
<dbReference type="InterPro" id="IPR002381">
    <property type="entry name" value="RNase_PH_bac-type"/>
</dbReference>
<dbReference type="InterPro" id="IPR018336">
    <property type="entry name" value="RNase_PH_CS"/>
</dbReference>
<dbReference type="NCBIfam" id="TIGR01966">
    <property type="entry name" value="RNasePH"/>
    <property type="match status" value="1"/>
</dbReference>
<dbReference type="PANTHER" id="PTHR11953">
    <property type="entry name" value="EXOSOME COMPLEX COMPONENT"/>
    <property type="match status" value="1"/>
</dbReference>
<dbReference type="PANTHER" id="PTHR11953:SF0">
    <property type="entry name" value="EXOSOME COMPLEX COMPONENT RRP41"/>
    <property type="match status" value="1"/>
</dbReference>
<dbReference type="Pfam" id="PF01138">
    <property type="entry name" value="RNase_PH"/>
    <property type="match status" value="1"/>
</dbReference>
<dbReference type="Pfam" id="PF03725">
    <property type="entry name" value="RNase_PH_C"/>
    <property type="match status" value="1"/>
</dbReference>
<dbReference type="SUPFAM" id="SSF55666">
    <property type="entry name" value="Ribonuclease PH domain 2-like"/>
    <property type="match status" value="1"/>
</dbReference>
<dbReference type="SUPFAM" id="SSF54211">
    <property type="entry name" value="Ribosomal protein S5 domain 2-like"/>
    <property type="match status" value="1"/>
</dbReference>
<dbReference type="PROSITE" id="PS01277">
    <property type="entry name" value="RIBONUCLEASE_PH"/>
    <property type="match status" value="1"/>
</dbReference>
<sequence>MRTDGRNNRELRPVHIQPHYIKHAEGSVLIEIGDTRVICTATVEDKVPPFMRGGGKGWITAEYGMLPRATEQRNAREASKGKVSGRTMEIQRLIGRALRSVVELEQLGERTVWIDCDVIQADGGTRTASITGAYVALVLALSKLVAEGKLESLPVRDFLAATSVGIDPEHGVILDLNYSEDARAKVDMNVVMTGAGQFVEIQGTGEEASFSRAELEELLETAQLGIEQLITIQRRVLGEQAALIGEKVEQEGKSE</sequence>
<organism>
    <name type="scientific">Geobacillus thermodenitrificans (strain NG80-2)</name>
    <dbReference type="NCBI Taxonomy" id="420246"/>
    <lineage>
        <taxon>Bacteria</taxon>
        <taxon>Bacillati</taxon>
        <taxon>Bacillota</taxon>
        <taxon>Bacilli</taxon>
        <taxon>Bacillales</taxon>
        <taxon>Anoxybacillaceae</taxon>
        <taxon>Geobacillus</taxon>
    </lineage>
</organism>
<feature type="chain" id="PRO_1000024813" description="Ribonuclease PH">
    <location>
        <begin position="1"/>
        <end position="255"/>
    </location>
</feature>
<feature type="binding site" evidence="1">
    <location>
        <position position="86"/>
    </location>
    <ligand>
        <name>phosphate</name>
        <dbReference type="ChEBI" id="CHEBI:43474"/>
        <note>substrate</note>
    </ligand>
</feature>
<feature type="binding site" evidence="1">
    <location>
        <begin position="124"/>
        <end position="126"/>
    </location>
    <ligand>
        <name>phosphate</name>
        <dbReference type="ChEBI" id="CHEBI:43474"/>
        <note>substrate</note>
    </ligand>
</feature>
<evidence type="ECO:0000255" key="1">
    <source>
        <dbReference type="HAMAP-Rule" id="MF_00564"/>
    </source>
</evidence>
<comment type="function">
    <text evidence="1">Phosphorolytic 3'-5' exoribonuclease that plays an important role in tRNA 3'-end maturation. Removes nucleotide residues following the 3'-CCA terminus of tRNAs; can also add nucleotides to the ends of RNA molecules by using nucleoside diphosphates as substrates, but this may not be physiologically important. Probably plays a role in initiation of 16S rRNA degradation (leading to ribosome degradation) during starvation.</text>
</comment>
<comment type="catalytic activity">
    <reaction evidence="1">
        <text>tRNA(n+1) + phosphate = tRNA(n) + a ribonucleoside 5'-diphosphate</text>
        <dbReference type="Rhea" id="RHEA:10628"/>
        <dbReference type="Rhea" id="RHEA-COMP:17343"/>
        <dbReference type="Rhea" id="RHEA-COMP:17344"/>
        <dbReference type="ChEBI" id="CHEBI:43474"/>
        <dbReference type="ChEBI" id="CHEBI:57930"/>
        <dbReference type="ChEBI" id="CHEBI:173114"/>
        <dbReference type="EC" id="2.7.7.56"/>
    </reaction>
</comment>
<comment type="subunit">
    <text evidence="1">Homohexameric ring arranged as a trimer of dimers.</text>
</comment>
<comment type="similarity">
    <text evidence="1">Belongs to the RNase PH family.</text>
</comment>
<reference key="1">
    <citation type="journal article" date="2007" name="Proc. Natl. Acad. Sci. U.S.A.">
        <title>Genome and proteome of long-chain alkane degrading Geobacillus thermodenitrificans NG80-2 isolated from a deep-subsurface oil reservoir.</title>
        <authorList>
            <person name="Feng L."/>
            <person name="Wang W."/>
            <person name="Cheng J."/>
            <person name="Ren Y."/>
            <person name="Zhao G."/>
            <person name="Gao C."/>
            <person name="Tang Y."/>
            <person name="Liu X."/>
            <person name="Han W."/>
            <person name="Peng X."/>
            <person name="Liu R."/>
            <person name="Wang L."/>
        </authorList>
    </citation>
    <scope>NUCLEOTIDE SEQUENCE [LARGE SCALE GENOMIC DNA]</scope>
    <source>
        <strain>NG80-2</strain>
    </source>
</reference>
<proteinExistence type="inferred from homology"/>
<protein>
    <recommendedName>
        <fullName evidence="1">Ribonuclease PH</fullName>
        <shortName evidence="1">RNase PH</shortName>
        <ecNumber evidence="1">2.7.7.56</ecNumber>
    </recommendedName>
    <alternativeName>
        <fullName evidence="1">tRNA nucleotidyltransferase</fullName>
    </alternativeName>
</protein>
<gene>
    <name evidence="1" type="primary">rph</name>
    <name type="ordered locus">GTNG_2594</name>
</gene>
<name>RNPH_GEOTN</name>
<keyword id="KW-0548">Nucleotidyltransferase</keyword>
<keyword id="KW-0694">RNA-binding</keyword>
<keyword id="KW-0698">rRNA processing</keyword>
<keyword id="KW-0808">Transferase</keyword>
<keyword id="KW-0819">tRNA processing</keyword>
<keyword id="KW-0820">tRNA-binding</keyword>
<accession>A4IRI5</accession>